<feature type="chain" id="PRO_0000166832" description="Peptide chain release factor 2">
    <location>
        <begin position="1"/>
        <end position="371"/>
    </location>
</feature>
<feature type="modified residue" description="N5-methylglutamine" evidence="1">
    <location>
        <position position="253"/>
    </location>
</feature>
<sequence length="371" mass="41473">MDPDRQADIAALDCTLTTVERVLDVEGLRSRIEKLEHEASDPHLWDDQTRAQRVTSELSHTQGELRRVEELRRRLDDLPVLYELAAEEAGAAAADAVAEADAELKSLRADIEATEVRTLLSGEYDEREALVTIRSGAGGVDAADWAEMLMRMYIRWAEQHKYPVEVFDTSYAEEAGIKSATFAVHAPFAYGTLSVEQGTHRLVRISPFDNQSRRQTSFAEVEVLPVVETTDHIDIPEGDVRVDVYRSSGPGGQSVNTTDSAVRLTHIPSGIVVTCQNEKSQLQNKIAAMRVLQAKLLERKRLEERAELDALKADGGSSWGNQMRSYVLHPYQMVKDLRTEYEVGNPAAVLDGDLDGFLEAGIRWRNRRNDD</sequence>
<comment type="function">
    <text evidence="1">Peptide chain release factor 2 directs the termination of translation in response to the peptide chain termination codons UGA and UAA.</text>
</comment>
<comment type="subcellular location">
    <subcellularLocation>
        <location evidence="1">Cytoplasm</location>
    </subcellularLocation>
</comment>
<comment type="PTM">
    <text evidence="1">Methylated by PrmC. Methylation increases the termination efficiency of RF2 (By similarity).</text>
</comment>
<comment type="miscellaneous">
    <text>Was identified as a high-confidence drug target.</text>
</comment>
<comment type="similarity">
    <text evidence="2">Belongs to the prokaryotic/mitochondrial release factor family.</text>
</comment>
<comment type="sequence caution" evidence="2">
    <conflict type="erroneous initiation">
        <sequence resource="EMBL-CDS" id="CCP45915"/>
    </conflict>
    <text>Extended N-terminus.</text>
</comment>
<proteinExistence type="evidence at protein level"/>
<name>RF2_MYCTU</name>
<accession>P9WHG1</accession>
<accession>L0TD65</accession>
<accession>O05782</accession>
<accession>P66026</accession>
<organism>
    <name type="scientific">Mycobacterium tuberculosis (strain ATCC 25618 / H37Rv)</name>
    <dbReference type="NCBI Taxonomy" id="83332"/>
    <lineage>
        <taxon>Bacteria</taxon>
        <taxon>Bacillati</taxon>
        <taxon>Actinomycetota</taxon>
        <taxon>Actinomycetes</taxon>
        <taxon>Mycobacteriales</taxon>
        <taxon>Mycobacteriaceae</taxon>
        <taxon>Mycobacterium</taxon>
        <taxon>Mycobacterium tuberculosis complex</taxon>
    </lineage>
</organism>
<keyword id="KW-0963">Cytoplasm</keyword>
<keyword id="KW-0488">Methylation</keyword>
<keyword id="KW-0648">Protein biosynthesis</keyword>
<keyword id="KW-1185">Reference proteome</keyword>
<evidence type="ECO:0000250" key="1"/>
<evidence type="ECO:0000305" key="2"/>
<reference key="1">
    <citation type="journal article" date="1998" name="Nature">
        <title>Deciphering the biology of Mycobacterium tuberculosis from the complete genome sequence.</title>
        <authorList>
            <person name="Cole S.T."/>
            <person name="Brosch R."/>
            <person name="Parkhill J."/>
            <person name="Garnier T."/>
            <person name="Churcher C.M."/>
            <person name="Harris D.E."/>
            <person name="Gordon S.V."/>
            <person name="Eiglmeier K."/>
            <person name="Gas S."/>
            <person name="Barry C.E. III"/>
            <person name="Tekaia F."/>
            <person name="Badcock K."/>
            <person name="Basham D."/>
            <person name="Brown D."/>
            <person name="Chillingworth T."/>
            <person name="Connor R."/>
            <person name="Davies R.M."/>
            <person name="Devlin K."/>
            <person name="Feltwell T."/>
            <person name="Gentles S."/>
            <person name="Hamlin N."/>
            <person name="Holroyd S."/>
            <person name="Hornsby T."/>
            <person name="Jagels K."/>
            <person name="Krogh A."/>
            <person name="McLean J."/>
            <person name="Moule S."/>
            <person name="Murphy L.D."/>
            <person name="Oliver S."/>
            <person name="Osborne J."/>
            <person name="Quail M.A."/>
            <person name="Rajandream M.A."/>
            <person name="Rogers J."/>
            <person name="Rutter S."/>
            <person name="Seeger K."/>
            <person name="Skelton S."/>
            <person name="Squares S."/>
            <person name="Squares R."/>
            <person name="Sulston J.E."/>
            <person name="Taylor K."/>
            <person name="Whitehead S."/>
            <person name="Barrell B.G."/>
        </authorList>
    </citation>
    <scope>NUCLEOTIDE SEQUENCE [LARGE SCALE GENOMIC DNA]</scope>
    <source>
        <strain>ATCC 25618 / H37Rv</strain>
    </source>
</reference>
<reference key="2">
    <citation type="journal article" date="2008" name="BMC Syst. Biol.">
        <title>targetTB: a target identification pipeline for Mycobacterium tuberculosis through an interactome, reactome and genome-scale structural analysis.</title>
        <authorList>
            <person name="Raman K."/>
            <person name="Yeturu K."/>
            <person name="Chandra N."/>
        </authorList>
    </citation>
    <scope>IDENTIFICATION AS A DRUG TARGET [LARGE SCALE ANALYSIS]</scope>
</reference>
<reference key="3">
    <citation type="journal article" date="2011" name="Mol. Cell. Proteomics">
        <title>Proteogenomic analysis of Mycobacterium tuberculosis by high resolution mass spectrometry.</title>
        <authorList>
            <person name="Kelkar D.S."/>
            <person name="Kumar D."/>
            <person name="Kumar P."/>
            <person name="Balakrishnan L."/>
            <person name="Muthusamy B."/>
            <person name="Yadav A.K."/>
            <person name="Shrivastava P."/>
            <person name="Marimuthu A."/>
            <person name="Anand S."/>
            <person name="Sundaram H."/>
            <person name="Kingsbury R."/>
            <person name="Harsha H.C."/>
            <person name="Nair B."/>
            <person name="Prasad T.S."/>
            <person name="Chauhan D.S."/>
            <person name="Katoch K."/>
            <person name="Katoch V.M."/>
            <person name="Kumar P."/>
            <person name="Chaerkady R."/>
            <person name="Ramachandran S."/>
            <person name="Dash D."/>
            <person name="Pandey A."/>
        </authorList>
    </citation>
    <scope>IDENTIFICATION BY MASS SPECTROMETRY [LARGE SCALE ANALYSIS]</scope>
    <source>
        <strain>ATCC 25618 / H37Rv</strain>
    </source>
</reference>
<gene>
    <name type="primary">prfB</name>
    <name type="ordered locus">Rv3105c</name>
    <name type="ORF">MTCY164.15c</name>
</gene>
<dbReference type="EMBL" id="AL123456">
    <property type="protein sequence ID" value="CCP45915.1"/>
    <property type="status" value="ALT_INIT"/>
    <property type="molecule type" value="Genomic_DNA"/>
</dbReference>
<dbReference type="PIR" id="H70919">
    <property type="entry name" value="H70919"/>
</dbReference>
<dbReference type="RefSeq" id="NP_217621.1">
    <property type="nucleotide sequence ID" value="NC_000962.3"/>
</dbReference>
<dbReference type="RefSeq" id="WP_003416129.1">
    <property type="nucleotide sequence ID" value="NZ_NVQJ01000011.1"/>
</dbReference>
<dbReference type="RefSeq" id="WP_003899912.1">
    <property type="nucleotide sequence ID" value="NC_000962.3"/>
</dbReference>
<dbReference type="SMR" id="P9WHG1"/>
<dbReference type="FunCoup" id="P9WHG1">
    <property type="interactions" value="205"/>
</dbReference>
<dbReference type="STRING" id="83332.Rv3105c"/>
<dbReference type="PaxDb" id="83332-Rv3105c"/>
<dbReference type="GeneID" id="45427104"/>
<dbReference type="GeneID" id="888820"/>
<dbReference type="KEGG" id="mtu:Rv3105c"/>
<dbReference type="PATRIC" id="fig|83332.12.peg.3463"/>
<dbReference type="TubercuList" id="Rv3105c"/>
<dbReference type="eggNOG" id="COG0216">
    <property type="taxonomic scope" value="Bacteria"/>
</dbReference>
<dbReference type="InParanoid" id="P9WHG1"/>
<dbReference type="OrthoDB" id="9806673at2"/>
<dbReference type="Proteomes" id="UP000001584">
    <property type="component" value="Chromosome"/>
</dbReference>
<dbReference type="GO" id="GO:0005737">
    <property type="term" value="C:cytoplasm"/>
    <property type="evidence" value="ECO:0007669"/>
    <property type="project" value="UniProtKB-SubCell"/>
</dbReference>
<dbReference type="GO" id="GO:0009274">
    <property type="term" value="C:peptidoglycan-based cell wall"/>
    <property type="evidence" value="ECO:0007005"/>
    <property type="project" value="MTBBASE"/>
</dbReference>
<dbReference type="GO" id="GO:0016149">
    <property type="term" value="F:translation release factor activity, codon specific"/>
    <property type="evidence" value="ECO:0007669"/>
    <property type="project" value="UniProtKB-UniRule"/>
</dbReference>
<dbReference type="FunFam" id="1.20.58.410:FF:000002">
    <property type="entry name" value="Peptide chain release factor 2"/>
    <property type="match status" value="1"/>
</dbReference>
<dbReference type="FunFam" id="3.30.160.20:FF:000010">
    <property type="entry name" value="Peptide chain release factor 2"/>
    <property type="match status" value="1"/>
</dbReference>
<dbReference type="Gene3D" id="3.30.160.20">
    <property type="match status" value="1"/>
</dbReference>
<dbReference type="Gene3D" id="3.30.70.1660">
    <property type="match status" value="1"/>
</dbReference>
<dbReference type="Gene3D" id="1.20.58.410">
    <property type="entry name" value="Release factor"/>
    <property type="match status" value="1"/>
</dbReference>
<dbReference type="HAMAP" id="MF_00094">
    <property type="entry name" value="Rel_fac_2"/>
    <property type="match status" value="1"/>
</dbReference>
<dbReference type="InterPro" id="IPR005139">
    <property type="entry name" value="PCRF"/>
</dbReference>
<dbReference type="InterPro" id="IPR000352">
    <property type="entry name" value="Pep_chain_release_fac_I"/>
</dbReference>
<dbReference type="InterPro" id="IPR045853">
    <property type="entry name" value="Pep_chain_release_fac_I_sf"/>
</dbReference>
<dbReference type="InterPro" id="IPR004374">
    <property type="entry name" value="PrfB"/>
</dbReference>
<dbReference type="NCBIfam" id="TIGR00020">
    <property type="entry name" value="prfB"/>
    <property type="match status" value="1"/>
</dbReference>
<dbReference type="PANTHER" id="PTHR43116:SF3">
    <property type="entry name" value="CLASS I PEPTIDE CHAIN RELEASE FACTOR"/>
    <property type="match status" value="1"/>
</dbReference>
<dbReference type="PANTHER" id="PTHR43116">
    <property type="entry name" value="PEPTIDE CHAIN RELEASE FACTOR 2"/>
    <property type="match status" value="1"/>
</dbReference>
<dbReference type="Pfam" id="PF03462">
    <property type="entry name" value="PCRF"/>
    <property type="match status" value="1"/>
</dbReference>
<dbReference type="Pfam" id="PF00472">
    <property type="entry name" value="RF-1"/>
    <property type="match status" value="1"/>
</dbReference>
<dbReference type="SMART" id="SM00937">
    <property type="entry name" value="PCRF"/>
    <property type="match status" value="1"/>
</dbReference>
<dbReference type="SUPFAM" id="SSF75620">
    <property type="entry name" value="Release factor"/>
    <property type="match status" value="1"/>
</dbReference>
<dbReference type="PROSITE" id="PS00745">
    <property type="entry name" value="RF_PROK_I"/>
    <property type="match status" value="1"/>
</dbReference>
<protein>
    <recommendedName>
        <fullName>Peptide chain release factor 2</fullName>
        <shortName>RF-2</shortName>
    </recommendedName>
</protein>